<keyword id="KW-0010">Activator</keyword>
<keyword id="KW-0067">ATP-binding</keyword>
<keyword id="KW-0963">Cytoplasm</keyword>
<keyword id="KW-0418">Kinase</keyword>
<keyword id="KW-0547">Nucleotide-binding</keyword>
<keyword id="KW-0539">Nucleus</keyword>
<keyword id="KW-0597">Phosphoprotein</keyword>
<keyword id="KW-1185">Reference proteome</keyword>
<keyword id="KW-0723">Serine/threonine-protein kinase</keyword>
<keyword id="KW-0804">Transcription</keyword>
<keyword id="KW-0805">Transcription regulation</keyword>
<keyword id="KW-0808">Transferase</keyword>
<sequence length="365" mass="41875">MAEFVRAQIFGTTFEITSRYTDLQPVGMGAFGLVCSARDQLTGQPVAVKKIMKPFSTPVLSKRTYRELKLLKHLRHENIISLSDIFISPLEDIYFVTELLGTDLHRLLTSRPLEKQFIQYFLYQILRGLKYVHSAGVVHRDLKPSNILINENCDLKICDFGLARIQDPQMTGYVSTRYYRAPEIMLTWQKYDVEVDIWSTGCIFAEMLEGKPLFPGKDHVNQFSIITELLGTPPDDVIQTICSENTLRFVKSLPKRERQPLANKFKNADPDAVDLLERMLVFDPKKRIRATEALAHEYLSPYHDPTDEPEAEEKFDWSFNDADLPVDTWKIMMYSEILDFHNIDQGNDASQALAEGLGQGQQNFA</sequence>
<organism>
    <name type="scientific">Aspergillus clavatus (strain ATCC 1007 / CBS 513.65 / DSM 816 / NCTC 3887 / NRRL 1 / QM 1276 / 107)</name>
    <dbReference type="NCBI Taxonomy" id="344612"/>
    <lineage>
        <taxon>Eukaryota</taxon>
        <taxon>Fungi</taxon>
        <taxon>Dikarya</taxon>
        <taxon>Ascomycota</taxon>
        <taxon>Pezizomycotina</taxon>
        <taxon>Eurotiomycetes</taxon>
        <taxon>Eurotiomycetidae</taxon>
        <taxon>Eurotiales</taxon>
        <taxon>Aspergillaceae</taxon>
        <taxon>Aspergillus</taxon>
        <taxon>Aspergillus subgen. Fumigati</taxon>
    </lineage>
</organism>
<name>HOG1_ASPCL</name>
<protein>
    <recommendedName>
        <fullName>Mitogen-activated protein kinase hog1</fullName>
        <shortName>MAP kinase hog1</shortName>
        <ecNumber evidence="2">2.7.11.24</ecNumber>
    </recommendedName>
</protein>
<evidence type="ECO:0000250" key="1"/>
<evidence type="ECO:0000250" key="2">
    <source>
        <dbReference type="UniProtKB" id="P32485"/>
    </source>
</evidence>
<evidence type="ECO:0000250" key="3">
    <source>
        <dbReference type="UniProtKB" id="Q16539"/>
    </source>
</evidence>
<evidence type="ECO:0000250" key="4">
    <source>
        <dbReference type="UniProtKB" id="Q4WSF6"/>
    </source>
</evidence>
<evidence type="ECO:0000255" key="5">
    <source>
        <dbReference type="PROSITE-ProRule" id="PRU00159"/>
    </source>
</evidence>
<evidence type="ECO:0000255" key="6">
    <source>
        <dbReference type="PROSITE-ProRule" id="PRU10027"/>
    </source>
</evidence>
<comment type="function">
    <text evidence="4">Proline-directed serine/threonine-protein kinase involved in a signal transduction pathway that is activated by changes in the osmolarity of the extracellular environment. Controls osmotic regulation of transcription of target genes.</text>
</comment>
<comment type="catalytic activity">
    <reaction evidence="2">
        <text>L-seryl-[protein] + ATP = O-phospho-L-seryl-[protein] + ADP + H(+)</text>
        <dbReference type="Rhea" id="RHEA:17989"/>
        <dbReference type="Rhea" id="RHEA-COMP:9863"/>
        <dbReference type="Rhea" id="RHEA-COMP:11604"/>
        <dbReference type="ChEBI" id="CHEBI:15378"/>
        <dbReference type="ChEBI" id="CHEBI:29999"/>
        <dbReference type="ChEBI" id="CHEBI:30616"/>
        <dbReference type="ChEBI" id="CHEBI:83421"/>
        <dbReference type="ChEBI" id="CHEBI:456216"/>
        <dbReference type="EC" id="2.7.11.24"/>
    </reaction>
    <physiologicalReaction direction="left-to-right" evidence="2">
        <dbReference type="Rhea" id="RHEA:17990"/>
    </physiologicalReaction>
</comment>
<comment type="catalytic activity">
    <reaction evidence="2">
        <text>L-threonyl-[protein] + ATP = O-phospho-L-threonyl-[protein] + ADP + H(+)</text>
        <dbReference type="Rhea" id="RHEA:46608"/>
        <dbReference type="Rhea" id="RHEA-COMP:11060"/>
        <dbReference type="Rhea" id="RHEA-COMP:11605"/>
        <dbReference type="ChEBI" id="CHEBI:15378"/>
        <dbReference type="ChEBI" id="CHEBI:30013"/>
        <dbReference type="ChEBI" id="CHEBI:30616"/>
        <dbReference type="ChEBI" id="CHEBI:61977"/>
        <dbReference type="ChEBI" id="CHEBI:456216"/>
        <dbReference type="EC" id="2.7.11.24"/>
    </reaction>
    <physiologicalReaction direction="left-to-right" evidence="2">
        <dbReference type="Rhea" id="RHEA:46609"/>
    </physiologicalReaction>
</comment>
<comment type="cofactor">
    <cofactor evidence="3">
        <name>Mg(2+)</name>
        <dbReference type="ChEBI" id="CHEBI:18420"/>
    </cofactor>
</comment>
<comment type="activity regulation">
    <text evidence="1">Activated by tyrosine and threonine phosphorylation.</text>
</comment>
<comment type="subcellular location">
    <subcellularLocation>
        <location evidence="1">Cytoplasm</location>
    </subcellularLocation>
    <subcellularLocation>
        <location evidence="1">Nucleus</location>
    </subcellularLocation>
</comment>
<comment type="domain">
    <text>The TXY motif contains the threonine and tyrosine residues whose phosphorylation activates the MAP kinases.</text>
</comment>
<comment type="PTM">
    <text evidence="1">Dually phosphorylated on Thr-171 and Tyr-173, which activates the enzyme.</text>
</comment>
<comment type="similarity">
    <text evidence="5">Belongs to the protein kinase superfamily. Ser/Thr protein kinase family. MAP kinase subfamily. HOG1 sub-subfamily.</text>
</comment>
<reference key="1">
    <citation type="journal article" date="2008" name="PLoS Genet.">
        <title>Genomic islands in the pathogenic filamentous fungus Aspergillus fumigatus.</title>
        <authorList>
            <person name="Fedorova N.D."/>
            <person name="Khaldi N."/>
            <person name="Joardar V.S."/>
            <person name="Maiti R."/>
            <person name="Amedeo P."/>
            <person name="Anderson M.J."/>
            <person name="Crabtree J."/>
            <person name="Silva J.C."/>
            <person name="Badger J.H."/>
            <person name="Albarraq A."/>
            <person name="Angiuoli S."/>
            <person name="Bussey H."/>
            <person name="Bowyer P."/>
            <person name="Cotty P.J."/>
            <person name="Dyer P.S."/>
            <person name="Egan A."/>
            <person name="Galens K."/>
            <person name="Fraser-Liggett C.M."/>
            <person name="Haas B.J."/>
            <person name="Inman J.M."/>
            <person name="Kent R."/>
            <person name="Lemieux S."/>
            <person name="Malavazi I."/>
            <person name="Orvis J."/>
            <person name="Roemer T."/>
            <person name="Ronning C.M."/>
            <person name="Sundaram J.P."/>
            <person name="Sutton G."/>
            <person name="Turner G."/>
            <person name="Venter J.C."/>
            <person name="White O.R."/>
            <person name="Whitty B.R."/>
            <person name="Youngman P."/>
            <person name="Wolfe K.H."/>
            <person name="Goldman G.H."/>
            <person name="Wortman J.R."/>
            <person name="Jiang B."/>
            <person name="Denning D.W."/>
            <person name="Nierman W.C."/>
        </authorList>
    </citation>
    <scope>NUCLEOTIDE SEQUENCE [LARGE SCALE GENOMIC DNA]</scope>
    <source>
        <strain>ATCC 1007 / CBS 513.65 / DSM 816 / NCTC 3887 / NRRL 1 / QM 1276 / 107</strain>
    </source>
</reference>
<dbReference type="EC" id="2.7.11.24" evidence="2"/>
<dbReference type="EMBL" id="DS027059">
    <property type="protein sequence ID" value="EAW07538.1"/>
    <property type="molecule type" value="Genomic_DNA"/>
</dbReference>
<dbReference type="RefSeq" id="XP_001268964.1">
    <property type="nucleotide sequence ID" value="XM_001268963.1"/>
</dbReference>
<dbReference type="SMR" id="A1CPG7"/>
<dbReference type="STRING" id="344612.A1CPG7"/>
<dbReference type="EnsemblFungi" id="EAW07538">
    <property type="protein sequence ID" value="EAW07538"/>
    <property type="gene ID" value="ACLA_022520"/>
</dbReference>
<dbReference type="GeneID" id="4701107"/>
<dbReference type="KEGG" id="act:ACLA_022520"/>
<dbReference type="VEuPathDB" id="FungiDB:ACLA_022520"/>
<dbReference type="eggNOG" id="KOG0660">
    <property type="taxonomic scope" value="Eukaryota"/>
</dbReference>
<dbReference type="HOGENOM" id="CLU_000288_181_1_1"/>
<dbReference type="OMA" id="NRYTDLN"/>
<dbReference type="OrthoDB" id="192887at2759"/>
<dbReference type="Proteomes" id="UP000006701">
    <property type="component" value="Unassembled WGS sequence"/>
</dbReference>
<dbReference type="GO" id="GO:0005737">
    <property type="term" value="C:cytoplasm"/>
    <property type="evidence" value="ECO:0007669"/>
    <property type="project" value="UniProtKB-SubCell"/>
</dbReference>
<dbReference type="GO" id="GO:0005634">
    <property type="term" value="C:nucleus"/>
    <property type="evidence" value="ECO:0007669"/>
    <property type="project" value="UniProtKB-SubCell"/>
</dbReference>
<dbReference type="GO" id="GO:0005524">
    <property type="term" value="F:ATP binding"/>
    <property type="evidence" value="ECO:0007669"/>
    <property type="project" value="UniProtKB-KW"/>
</dbReference>
<dbReference type="GO" id="GO:0004707">
    <property type="term" value="F:MAP kinase activity"/>
    <property type="evidence" value="ECO:0007669"/>
    <property type="project" value="UniProtKB-EC"/>
</dbReference>
<dbReference type="GO" id="GO:0106310">
    <property type="term" value="F:protein serine kinase activity"/>
    <property type="evidence" value="ECO:0007669"/>
    <property type="project" value="RHEA"/>
</dbReference>
<dbReference type="GO" id="GO:0051403">
    <property type="term" value="P:stress-activated MAPK cascade"/>
    <property type="evidence" value="ECO:0007669"/>
    <property type="project" value="InterPro"/>
</dbReference>
<dbReference type="CDD" id="cd07856">
    <property type="entry name" value="STKc_Sty1_Hog1"/>
    <property type="match status" value="1"/>
</dbReference>
<dbReference type="FunFam" id="1.10.510.10:FF:000049">
    <property type="entry name" value="Mitogen-activated protein kinase"/>
    <property type="match status" value="1"/>
</dbReference>
<dbReference type="FunFam" id="3.30.200.20:FF:000050">
    <property type="entry name" value="Mitogen-activated protein kinase"/>
    <property type="match status" value="1"/>
</dbReference>
<dbReference type="Gene3D" id="3.30.200.20">
    <property type="entry name" value="Phosphorylase Kinase, domain 1"/>
    <property type="match status" value="1"/>
</dbReference>
<dbReference type="Gene3D" id="1.10.510.10">
    <property type="entry name" value="Transferase(Phosphotransferase) domain 1"/>
    <property type="match status" value="1"/>
</dbReference>
<dbReference type="InterPro" id="IPR011009">
    <property type="entry name" value="Kinase-like_dom_sf"/>
</dbReference>
<dbReference type="InterPro" id="IPR050117">
    <property type="entry name" value="MAP_kinase"/>
</dbReference>
<dbReference type="InterPro" id="IPR003527">
    <property type="entry name" value="MAP_kinase_CS"/>
</dbReference>
<dbReference type="InterPro" id="IPR008352">
    <property type="entry name" value="MAPK_p38-like"/>
</dbReference>
<dbReference type="InterPro" id="IPR038783">
    <property type="entry name" value="MAPK_Sty1/Hog1"/>
</dbReference>
<dbReference type="InterPro" id="IPR000719">
    <property type="entry name" value="Prot_kinase_dom"/>
</dbReference>
<dbReference type="InterPro" id="IPR017441">
    <property type="entry name" value="Protein_kinase_ATP_BS"/>
</dbReference>
<dbReference type="InterPro" id="IPR008271">
    <property type="entry name" value="Ser/Thr_kinase_AS"/>
</dbReference>
<dbReference type="PANTHER" id="PTHR24055">
    <property type="entry name" value="MITOGEN-ACTIVATED PROTEIN KINASE"/>
    <property type="match status" value="1"/>
</dbReference>
<dbReference type="Pfam" id="PF00069">
    <property type="entry name" value="Pkinase"/>
    <property type="match status" value="1"/>
</dbReference>
<dbReference type="PRINTS" id="PR01773">
    <property type="entry name" value="P38MAPKINASE"/>
</dbReference>
<dbReference type="SMART" id="SM00220">
    <property type="entry name" value="S_TKc"/>
    <property type="match status" value="1"/>
</dbReference>
<dbReference type="SUPFAM" id="SSF56112">
    <property type="entry name" value="Protein kinase-like (PK-like)"/>
    <property type="match status" value="1"/>
</dbReference>
<dbReference type="PROSITE" id="PS01351">
    <property type="entry name" value="MAPK"/>
    <property type="match status" value="1"/>
</dbReference>
<dbReference type="PROSITE" id="PS00107">
    <property type="entry name" value="PROTEIN_KINASE_ATP"/>
    <property type="match status" value="1"/>
</dbReference>
<dbReference type="PROSITE" id="PS50011">
    <property type="entry name" value="PROTEIN_KINASE_DOM"/>
    <property type="match status" value="1"/>
</dbReference>
<dbReference type="PROSITE" id="PS00108">
    <property type="entry name" value="PROTEIN_KINASE_ST"/>
    <property type="match status" value="1"/>
</dbReference>
<gene>
    <name type="primary">hog1</name>
    <name type="ORF">ACLA_022520</name>
</gene>
<proteinExistence type="inferred from homology"/>
<feature type="chain" id="PRO_0000289673" description="Mitogen-activated protein kinase hog1">
    <location>
        <begin position="1"/>
        <end position="365"/>
    </location>
</feature>
<feature type="domain" description="Protein kinase" evidence="5">
    <location>
        <begin position="20"/>
        <end position="299"/>
    </location>
</feature>
<feature type="short sequence motif" description="TXY">
    <location>
        <begin position="171"/>
        <end position="173"/>
    </location>
</feature>
<feature type="active site" description="Proton acceptor" evidence="5 6">
    <location>
        <position position="141"/>
    </location>
</feature>
<feature type="binding site" evidence="5">
    <location>
        <begin position="26"/>
        <end position="34"/>
    </location>
    <ligand>
        <name>ATP</name>
        <dbReference type="ChEBI" id="CHEBI:30616"/>
    </ligand>
</feature>
<feature type="binding site" evidence="5">
    <location>
        <position position="49"/>
    </location>
    <ligand>
        <name>ATP</name>
        <dbReference type="ChEBI" id="CHEBI:30616"/>
    </ligand>
</feature>
<feature type="modified residue" description="Phosphothreonine" evidence="1">
    <location>
        <position position="171"/>
    </location>
</feature>
<feature type="modified residue" description="Phosphotyrosine" evidence="1">
    <location>
        <position position="173"/>
    </location>
</feature>
<accession>A1CPG7</accession>